<reference key="1">
    <citation type="journal article" date="2005" name="Genome Biol.">
        <title>Full-length cDNAs from chicken bursal lymphocytes to facilitate gene function analysis.</title>
        <authorList>
            <person name="Caldwell R.B."/>
            <person name="Kierzek A.M."/>
            <person name="Arakawa H."/>
            <person name="Bezzubov Y."/>
            <person name="Zaim J."/>
            <person name="Fiedler P."/>
            <person name="Kutter S."/>
            <person name="Blagodatski A."/>
            <person name="Kostovska D."/>
            <person name="Koter M."/>
            <person name="Plachy J."/>
            <person name="Carninci P."/>
            <person name="Hayashizaki Y."/>
            <person name="Buerstedde J.-M."/>
        </authorList>
    </citation>
    <scope>NUCLEOTIDE SEQUENCE [LARGE SCALE MRNA]</scope>
    <source>
        <strain>CB</strain>
        <tissue>Bursa of Fabricius</tissue>
    </source>
</reference>
<comment type="function">
    <text evidence="1">Hydrolase that can remove conjugated ubiquitin from proteins and participates in endoplasmic reticulum-associated degradation (ERAD) for misfolded lumenal proteins. May act by triming the ubiquitin chain on the associated substrate to facilitate their threading through the VCP/p97 pore. Ubiquitin moieties on substrates may present a steric impediment to the threading process when the substrate is transferred to the VCP pore and threaded through VCP's axial channel. Mediates deubiquitination of 'Lys-27'-, 'Lys-29'- and 'Lys-33'-linked polyubiquitin chains. Also able to hydrolyze 'Lys-11'-linked ubiquitin chains. Cleaves both polyubiquitin and di-ubiquitin.</text>
</comment>
<comment type="catalytic activity">
    <reaction evidence="1">
        <text>Thiol-dependent hydrolysis of ester, thioester, amide, peptide and isopeptide bonds formed by the C-terminal Gly of ubiquitin (a 76-residue protein attached to proteins as an intracellular targeting signal).</text>
        <dbReference type="EC" id="3.4.19.12"/>
    </reaction>
</comment>
<comment type="subcellular location">
    <subcellularLocation>
        <location evidence="1">Cytoplasm</location>
    </subcellularLocation>
</comment>
<protein>
    <recommendedName>
        <fullName>Ubiquitin thioesterase OTU1</fullName>
        <ecNumber evidence="1">3.4.19.12</ecNumber>
    </recommendedName>
</protein>
<feature type="chain" id="PRO_0000282359" description="Ubiquitin thioesterase OTU1">
    <location>
        <begin position="1"/>
        <end position="302"/>
    </location>
</feature>
<feature type="domain" description="OTU" evidence="3">
    <location>
        <begin position="103"/>
        <end position="228"/>
    </location>
</feature>
<feature type="zinc finger region" description="C2H2-type">
    <location>
        <begin position="272"/>
        <end position="296"/>
    </location>
</feature>
<feature type="region of interest" description="UBX-like">
    <location>
        <begin position="5"/>
        <end position="83"/>
    </location>
</feature>
<feature type="region of interest" description="Cys-loop" evidence="1">
    <location>
        <begin position="108"/>
        <end position="114"/>
    </location>
</feature>
<feature type="region of interest" description="Variable-loop" evidence="1">
    <location>
        <begin position="167"/>
        <end position="177"/>
    </location>
</feature>
<feature type="region of interest" description="His-loop" evidence="1">
    <location>
        <begin position="217"/>
        <end position="221"/>
    </location>
</feature>
<feature type="region of interest" description="S2 site" evidence="1">
    <location>
        <begin position="245"/>
        <end position="250"/>
    </location>
</feature>
<feature type="active site" evidence="2">
    <location>
        <position position="111"/>
    </location>
</feature>
<feature type="active site" description="Nucleophile" evidence="1">
    <location>
        <position position="114"/>
    </location>
</feature>
<feature type="active site" evidence="1">
    <location>
        <position position="221"/>
    </location>
</feature>
<feature type="active site" evidence="2">
    <location>
        <position position="296"/>
    </location>
</feature>
<feature type="binding site" evidence="1">
    <location>
        <position position="220"/>
    </location>
    <ligand>
        <name>substrate</name>
    </ligand>
</feature>
<organism>
    <name type="scientific">Gallus gallus</name>
    <name type="common">Chicken</name>
    <dbReference type="NCBI Taxonomy" id="9031"/>
    <lineage>
        <taxon>Eukaryota</taxon>
        <taxon>Metazoa</taxon>
        <taxon>Chordata</taxon>
        <taxon>Craniata</taxon>
        <taxon>Vertebrata</taxon>
        <taxon>Euteleostomi</taxon>
        <taxon>Archelosauria</taxon>
        <taxon>Archosauria</taxon>
        <taxon>Dinosauria</taxon>
        <taxon>Saurischia</taxon>
        <taxon>Theropoda</taxon>
        <taxon>Coelurosauria</taxon>
        <taxon>Aves</taxon>
        <taxon>Neognathae</taxon>
        <taxon>Galloanserae</taxon>
        <taxon>Galliformes</taxon>
        <taxon>Phasianidae</taxon>
        <taxon>Phasianinae</taxon>
        <taxon>Gallus</taxon>
    </lineage>
</organism>
<gene>
    <name type="primary">YOD1</name>
    <name type="ORF">RCJMB04_24h21</name>
</gene>
<accession>Q5F3A6</accession>
<name>OTU1_CHICK</name>
<dbReference type="EC" id="3.4.19.12" evidence="1"/>
<dbReference type="EMBL" id="AJ851744">
    <property type="protein sequence ID" value="CAH65378.1"/>
    <property type="molecule type" value="mRNA"/>
</dbReference>
<dbReference type="RefSeq" id="NP_001026670.1">
    <property type="nucleotide sequence ID" value="NM_001031499.2"/>
</dbReference>
<dbReference type="SMR" id="Q5F3A6"/>
<dbReference type="FunCoup" id="Q5F3A6">
    <property type="interactions" value="972"/>
</dbReference>
<dbReference type="STRING" id="9031.ENSGALP00000048440"/>
<dbReference type="MEROPS" id="C85.007"/>
<dbReference type="PaxDb" id="9031-ENSGALP00000039556"/>
<dbReference type="GeneID" id="428266"/>
<dbReference type="KEGG" id="gga:428266"/>
<dbReference type="CTD" id="55432"/>
<dbReference type="VEuPathDB" id="HostDB:geneid_428266"/>
<dbReference type="eggNOG" id="KOG3288">
    <property type="taxonomic scope" value="Eukaryota"/>
</dbReference>
<dbReference type="InParanoid" id="Q5F3A6"/>
<dbReference type="OMA" id="TRCILVY"/>
<dbReference type="OrthoDB" id="65596at2759"/>
<dbReference type="PhylomeDB" id="Q5F3A6"/>
<dbReference type="PRO" id="PR:Q5F3A6"/>
<dbReference type="Proteomes" id="UP000000539">
    <property type="component" value="Unassembled WGS sequence"/>
</dbReference>
<dbReference type="GO" id="GO:0005737">
    <property type="term" value="C:cytoplasm"/>
    <property type="evidence" value="ECO:0000250"/>
    <property type="project" value="UniProtKB"/>
</dbReference>
<dbReference type="GO" id="GO:0004843">
    <property type="term" value="F:cysteine-type deubiquitinase activity"/>
    <property type="evidence" value="ECO:0000250"/>
    <property type="project" value="UniProtKB"/>
</dbReference>
<dbReference type="GO" id="GO:0008270">
    <property type="term" value="F:zinc ion binding"/>
    <property type="evidence" value="ECO:0007669"/>
    <property type="project" value="UniProtKB-KW"/>
</dbReference>
<dbReference type="GO" id="GO:0030968">
    <property type="term" value="P:endoplasmic reticulum unfolded protein response"/>
    <property type="evidence" value="ECO:0000250"/>
    <property type="project" value="UniProtKB"/>
</dbReference>
<dbReference type="GO" id="GO:0036503">
    <property type="term" value="P:ERAD pathway"/>
    <property type="evidence" value="ECO:0000250"/>
    <property type="project" value="UniProtKB"/>
</dbReference>
<dbReference type="GO" id="GO:0016236">
    <property type="term" value="P:macroautophagy"/>
    <property type="evidence" value="ECO:0000250"/>
    <property type="project" value="UniProtKB"/>
</dbReference>
<dbReference type="GO" id="GO:0035871">
    <property type="term" value="P:protein K11-linked deubiquitination"/>
    <property type="evidence" value="ECO:0000250"/>
    <property type="project" value="UniProtKB"/>
</dbReference>
<dbReference type="GO" id="GO:1990167">
    <property type="term" value="P:protein K27-linked deubiquitination"/>
    <property type="evidence" value="ECO:0000250"/>
    <property type="project" value="UniProtKB"/>
</dbReference>
<dbReference type="GO" id="GO:0035523">
    <property type="term" value="P:protein K29-linked deubiquitination"/>
    <property type="evidence" value="ECO:0000250"/>
    <property type="project" value="UniProtKB"/>
</dbReference>
<dbReference type="GO" id="GO:1990168">
    <property type="term" value="P:protein K33-linked deubiquitination"/>
    <property type="evidence" value="ECO:0000250"/>
    <property type="project" value="UniProtKB"/>
</dbReference>
<dbReference type="GO" id="GO:0071108">
    <property type="term" value="P:protein K48-linked deubiquitination"/>
    <property type="evidence" value="ECO:0000250"/>
    <property type="project" value="UniProtKB"/>
</dbReference>
<dbReference type="GO" id="GO:0070536">
    <property type="term" value="P:protein K63-linked deubiquitination"/>
    <property type="evidence" value="ECO:0000250"/>
    <property type="project" value="UniProtKB"/>
</dbReference>
<dbReference type="CDD" id="cd22745">
    <property type="entry name" value="OTU_OTU1"/>
    <property type="match status" value="1"/>
</dbReference>
<dbReference type="CDD" id="cd17059">
    <property type="entry name" value="Ubl_OTU1"/>
    <property type="match status" value="1"/>
</dbReference>
<dbReference type="FunFam" id="3.10.20.90:FF:000096">
    <property type="entry name" value="Ubiquitin thioesterase OTU1"/>
    <property type="match status" value="1"/>
</dbReference>
<dbReference type="FunFam" id="3.90.70.80:FF:000006">
    <property type="entry name" value="Ubiquitin thioesterase OTU1"/>
    <property type="match status" value="1"/>
</dbReference>
<dbReference type="Gene3D" id="3.90.70.80">
    <property type="match status" value="1"/>
</dbReference>
<dbReference type="Gene3D" id="3.10.20.90">
    <property type="entry name" value="Phosphatidylinositol 3-kinase Catalytic Subunit, Chain A, domain 1"/>
    <property type="match status" value="1"/>
</dbReference>
<dbReference type="InterPro" id="IPR048857">
    <property type="entry name" value="OTU1_Ubl"/>
</dbReference>
<dbReference type="InterPro" id="IPR003323">
    <property type="entry name" value="OTU_dom"/>
</dbReference>
<dbReference type="InterPro" id="IPR038765">
    <property type="entry name" value="Papain-like_cys_pep_sf"/>
</dbReference>
<dbReference type="InterPro" id="IPR029071">
    <property type="entry name" value="Ubiquitin-like_domsf"/>
</dbReference>
<dbReference type="InterPro" id="IPR013087">
    <property type="entry name" value="Znf_C2H2_type"/>
</dbReference>
<dbReference type="PANTHER" id="PTHR13312">
    <property type="entry name" value="HIV-INDUCED PROTEIN-7-LIKE PROTEASE"/>
    <property type="match status" value="1"/>
</dbReference>
<dbReference type="PANTHER" id="PTHR13312:SF0">
    <property type="entry name" value="UBIQUITIN THIOESTERASE OTU1"/>
    <property type="match status" value="1"/>
</dbReference>
<dbReference type="Pfam" id="PF02338">
    <property type="entry name" value="OTU"/>
    <property type="match status" value="1"/>
</dbReference>
<dbReference type="Pfam" id="PF21403">
    <property type="entry name" value="OTU1_UBXL"/>
    <property type="match status" value="1"/>
</dbReference>
<dbReference type="Pfam" id="PF24560">
    <property type="entry name" value="zf-C2H2_OTU1_C"/>
    <property type="match status" value="1"/>
</dbReference>
<dbReference type="SUPFAM" id="SSF54001">
    <property type="entry name" value="Cysteine proteinases"/>
    <property type="match status" value="1"/>
</dbReference>
<dbReference type="SUPFAM" id="SSF54236">
    <property type="entry name" value="Ubiquitin-like"/>
    <property type="match status" value="1"/>
</dbReference>
<dbReference type="PROSITE" id="PS50802">
    <property type="entry name" value="OTU"/>
    <property type="match status" value="1"/>
</dbReference>
<dbReference type="PROSITE" id="PS00028">
    <property type="entry name" value="ZINC_FINGER_C2H2_1"/>
    <property type="match status" value="1"/>
</dbReference>
<proteinExistence type="evidence at transcript level"/>
<keyword id="KW-0963">Cytoplasm</keyword>
<keyword id="KW-0378">Hydrolase</keyword>
<keyword id="KW-0479">Metal-binding</keyword>
<keyword id="KW-0645">Protease</keyword>
<keyword id="KW-1185">Reference proteome</keyword>
<keyword id="KW-0788">Thiol protease</keyword>
<keyword id="KW-0833">Ubl conjugation pathway</keyword>
<keyword id="KW-0834">Unfolded protein response</keyword>
<keyword id="KW-0862">Zinc</keyword>
<keyword id="KW-0863">Zinc-finger</keyword>
<evidence type="ECO:0000250" key="1">
    <source>
        <dbReference type="UniProtKB" id="Q5VVQ6"/>
    </source>
</evidence>
<evidence type="ECO:0000250" key="2">
    <source>
        <dbReference type="UniProtKB" id="Q96FW1"/>
    </source>
</evidence>
<evidence type="ECO:0000255" key="3">
    <source>
        <dbReference type="PROSITE-ProRule" id="PRU00139"/>
    </source>
</evidence>
<sequence>MLRLRCKARSGTQPLPGLTAHSRLRDMQAALAALTGVPAPAQRLLLGFPPRSLDLSDGERRLGELGIHSGDTLIVEEDTSKPSAGSPVVAKRTMAVREAVPVLARRVVPADNSCLFTSVYYVVEGGVYDPGCAPEMRSLIAQIVASDPEAYCEAVLGKTNREYCEWIRREETWGGAIEVSILSKFYQCEICVVDTQTVRIDRFGEDAGYTKRVLLIYDGIHYDPLERKIPDSDVPPQTIFSTTDDVVLAQALELADEARRKRQFTDVNRFTLRCMVCQKGLTGQVEAREHAKETGHTNFGEV</sequence>